<keyword id="KW-0029">Amino-acid transport</keyword>
<keyword id="KW-0472">Membrane</keyword>
<keyword id="KW-0597">Phosphoprotein</keyword>
<keyword id="KW-1185">Reference proteome</keyword>
<keyword id="KW-0812">Transmembrane</keyword>
<keyword id="KW-1133">Transmembrane helix</keyword>
<keyword id="KW-0813">Transport</keyword>
<keyword id="KW-0926">Vacuole</keyword>
<reference key="1">
    <citation type="journal article" date="1997" name="Yeast">
        <title>An 18.3 kb DNA fragment from yeast chromosome VII carries four unknown open reading frames, the gene for an Asn synthase, remnants of Ty and three tRNA genes.</title>
        <authorList>
            <person name="van Dyck L."/>
            <person name="Tettelin H."/>
            <person name="Purnelle B."/>
            <person name="Goffeau A."/>
        </authorList>
    </citation>
    <scope>NUCLEOTIDE SEQUENCE [GENOMIC DNA]</scope>
    <source>
        <strain>ATCC 96604 / S288c / FY1679</strain>
    </source>
</reference>
<reference key="2">
    <citation type="journal article" date="1997" name="Nature">
        <title>The nucleotide sequence of Saccharomyces cerevisiae chromosome VII.</title>
        <authorList>
            <person name="Tettelin H."/>
            <person name="Agostoni-Carbone M.L."/>
            <person name="Albermann K."/>
            <person name="Albers M."/>
            <person name="Arroyo J."/>
            <person name="Backes U."/>
            <person name="Barreiros T."/>
            <person name="Bertani I."/>
            <person name="Bjourson A.J."/>
            <person name="Brueckner M."/>
            <person name="Bruschi C.V."/>
            <person name="Carignani G."/>
            <person name="Castagnoli L."/>
            <person name="Cerdan E."/>
            <person name="Clemente M.L."/>
            <person name="Coblenz A."/>
            <person name="Coglievina M."/>
            <person name="Coissac E."/>
            <person name="Defoor E."/>
            <person name="Del Bino S."/>
            <person name="Delius H."/>
            <person name="Delneri D."/>
            <person name="de Wergifosse P."/>
            <person name="Dujon B."/>
            <person name="Durand P."/>
            <person name="Entian K.-D."/>
            <person name="Eraso P."/>
            <person name="Escribano V."/>
            <person name="Fabiani L."/>
            <person name="Fartmann B."/>
            <person name="Feroli F."/>
            <person name="Feuermann M."/>
            <person name="Frontali L."/>
            <person name="Garcia-Gonzalez M."/>
            <person name="Garcia-Saez M.I."/>
            <person name="Goffeau A."/>
            <person name="Guerreiro P."/>
            <person name="Hani J."/>
            <person name="Hansen M."/>
            <person name="Hebling U."/>
            <person name="Hernandez K."/>
            <person name="Heumann K."/>
            <person name="Hilger F."/>
            <person name="Hofmann B."/>
            <person name="Indge K.J."/>
            <person name="James C.M."/>
            <person name="Klima R."/>
            <person name="Koetter P."/>
            <person name="Kramer B."/>
            <person name="Kramer W."/>
            <person name="Lauquin G."/>
            <person name="Leuther H."/>
            <person name="Louis E.J."/>
            <person name="Maillier E."/>
            <person name="Marconi A."/>
            <person name="Martegani E."/>
            <person name="Mazon M.J."/>
            <person name="Mazzoni C."/>
            <person name="McReynolds A.D.K."/>
            <person name="Melchioretto P."/>
            <person name="Mewes H.-W."/>
            <person name="Minenkova O."/>
            <person name="Mueller-Auer S."/>
            <person name="Nawrocki A."/>
            <person name="Netter P."/>
            <person name="Neu R."/>
            <person name="Nombela C."/>
            <person name="Oliver S.G."/>
            <person name="Panzeri L."/>
            <person name="Paoluzi S."/>
            <person name="Plevani P."/>
            <person name="Portetelle D."/>
            <person name="Portillo F."/>
            <person name="Potier S."/>
            <person name="Purnelle B."/>
            <person name="Rieger M."/>
            <person name="Riles L."/>
            <person name="Rinaldi T."/>
            <person name="Robben J."/>
            <person name="Rodrigues-Pousada C."/>
            <person name="Rodriguez-Belmonte E."/>
            <person name="Rodriguez-Torres A.M."/>
            <person name="Rose M."/>
            <person name="Ruzzi M."/>
            <person name="Saliola M."/>
            <person name="Sanchez-Perez M."/>
            <person name="Schaefer B."/>
            <person name="Schaefer M."/>
            <person name="Scharfe M."/>
            <person name="Schmidheini T."/>
            <person name="Schreer A."/>
            <person name="Skala J."/>
            <person name="Souciet J.-L."/>
            <person name="Steensma H.Y."/>
            <person name="Talla E."/>
            <person name="Thierry A."/>
            <person name="Vandenbol M."/>
            <person name="van der Aart Q.J.M."/>
            <person name="Van Dyck L."/>
            <person name="Vanoni M."/>
            <person name="Verhasselt P."/>
            <person name="Voet M."/>
            <person name="Volckaert G."/>
            <person name="Wambutt R."/>
            <person name="Watson M.D."/>
            <person name="Weber N."/>
            <person name="Wedler E."/>
            <person name="Wedler H."/>
            <person name="Wipfli P."/>
            <person name="Wolf K."/>
            <person name="Wright L.F."/>
            <person name="Zaccaria P."/>
            <person name="Zimmermann M."/>
            <person name="Zollner A."/>
            <person name="Kleine K."/>
        </authorList>
    </citation>
    <scope>NUCLEOTIDE SEQUENCE [LARGE SCALE GENOMIC DNA]</scope>
    <source>
        <strain>ATCC 204508 / S288c</strain>
    </source>
</reference>
<reference key="3">
    <citation type="journal article" date="2014" name="G3 (Bethesda)">
        <title>The reference genome sequence of Saccharomyces cerevisiae: Then and now.</title>
        <authorList>
            <person name="Engel S.R."/>
            <person name="Dietrich F.S."/>
            <person name="Fisk D.G."/>
            <person name="Binkley G."/>
            <person name="Balakrishnan R."/>
            <person name="Costanzo M.C."/>
            <person name="Dwight S.S."/>
            <person name="Hitz B.C."/>
            <person name="Karra K."/>
            <person name="Nash R.S."/>
            <person name="Weng S."/>
            <person name="Wong E.D."/>
            <person name="Lloyd P."/>
            <person name="Skrzypek M.S."/>
            <person name="Miyasato S.R."/>
            <person name="Simison M."/>
            <person name="Cherry J.M."/>
        </authorList>
    </citation>
    <scope>GENOME REANNOTATION</scope>
    <source>
        <strain>ATCC 204508 / S288c</strain>
    </source>
</reference>
<reference key="4">
    <citation type="journal article" date="2003" name="Nature">
        <title>Global analysis of protein localization in budding yeast.</title>
        <authorList>
            <person name="Huh W.-K."/>
            <person name="Falvo J.V."/>
            <person name="Gerke L.C."/>
            <person name="Carroll A.S."/>
            <person name="Howson R.W."/>
            <person name="Weissman J.S."/>
            <person name="O'Shea E.K."/>
        </authorList>
    </citation>
    <scope>SUBCELLULAR LOCATION [LARGE SCALE ANALYSIS]</scope>
</reference>
<reference key="5">
    <citation type="journal article" date="2003" name="Nature">
        <title>Global analysis of protein expression in yeast.</title>
        <authorList>
            <person name="Ghaemmaghami S."/>
            <person name="Huh W.-K."/>
            <person name="Bower K."/>
            <person name="Howson R.W."/>
            <person name="Belle A."/>
            <person name="Dephoure N."/>
            <person name="O'Shea E.K."/>
            <person name="Weissman J.S."/>
        </authorList>
    </citation>
    <scope>LEVEL OF PROTEIN EXPRESSION [LARGE SCALE ANALYSIS]</scope>
</reference>
<reference key="6">
    <citation type="journal article" date="2005" name="Mol. Cell. Proteomics">
        <title>Quantitative phosphoproteomics applied to the yeast pheromone signaling pathway.</title>
        <authorList>
            <person name="Gruhler A."/>
            <person name="Olsen J.V."/>
            <person name="Mohammed S."/>
            <person name="Mortensen P."/>
            <person name="Faergeman N.J."/>
            <person name="Mann M."/>
            <person name="Jensen O.N."/>
        </authorList>
    </citation>
    <scope>PHOSPHORYLATION [LARGE SCALE ANALYSIS] AT SER-42</scope>
    <scope>IDENTIFICATION BY MASS SPECTROMETRY [LARGE SCALE ANALYSIS]</scope>
    <source>
        <strain>YAL6B</strain>
    </source>
</reference>
<reference key="7">
    <citation type="journal article" date="2006" name="Proc. Natl. Acad. Sci. U.S.A.">
        <title>A global topology map of the Saccharomyces cerevisiae membrane proteome.</title>
        <authorList>
            <person name="Kim H."/>
            <person name="Melen K."/>
            <person name="Oesterberg M."/>
            <person name="von Heijne G."/>
        </authorList>
    </citation>
    <scope>TOPOLOGY [LARGE SCALE ANALYSIS]</scope>
    <source>
        <strain>ATCC 208353 / W303-1A</strain>
    </source>
</reference>
<reference key="8">
    <citation type="journal article" date="2007" name="J. Proteome Res.">
        <title>Large-scale phosphorylation analysis of alpha-factor-arrested Saccharomyces cerevisiae.</title>
        <authorList>
            <person name="Li X."/>
            <person name="Gerber S.A."/>
            <person name="Rudner A.D."/>
            <person name="Beausoleil S.A."/>
            <person name="Haas W."/>
            <person name="Villen J."/>
            <person name="Elias J.E."/>
            <person name="Gygi S.P."/>
        </authorList>
    </citation>
    <scope>PHOSPHORYLATION [LARGE SCALE ANALYSIS] AT SER-140; SER-149; SER-152; SER-153; SER-842 AND THR-847</scope>
    <scope>IDENTIFICATION BY MASS SPECTROMETRY [LARGE SCALE ANALYSIS]</scope>
    <source>
        <strain>ADR376</strain>
    </source>
</reference>
<reference key="9">
    <citation type="journal article" date="2008" name="Mol. Cell. Proteomics">
        <title>A multidimensional chromatography technology for in-depth phosphoproteome analysis.</title>
        <authorList>
            <person name="Albuquerque C.P."/>
            <person name="Smolka M.B."/>
            <person name="Payne S.H."/>
            <person name="Bafna V."/>
            <person name="Eng J."/>
            <person name="Zhou H."/>
        </authorList>
    </citation>
    <scope>PHOSPHORYLATION [LARGE SCALE ANALYSIS] AT SER-42; SER-842 AND THR-847</scope>
    <scope>IDENTIFICATION BY MASS SPECTROMETRY [LARGE SCALE ANALYSIS]</scope>
</reference>
<reference key="10">
    <citation type="journal article" date="2009" name="Science">
        <title>Global analysis of Cdk1 substrate phosphorylation sites provides insights into evolution.</title>
        <authorList>
            <person name="Holt L.J."/>
            <person name="Tuch B.B."/>
            <person name="Villen J."/>
            <person name="Johnson A.D."/>
            <person name="Gygi S.P."/>
            <person name="Morgan D.O."/>
        </authorList>
    </citation>
    <scope>PHOSPHORYLATION [LARGE SCALE ANALYSIS] AT SER-42; SER-127; THR-130; SER-140; SER-144; SER-149; SER-842 AND THR-847</scope>
    <scope>IDENTIFICATION BY MASS SPECTROMETRY [LARGE SCALE ANALYSIS]</scope>
</reference>
<reference key="11">
    <citation type="journal article" date="2020" name="PLoS Genet.">
        <title>Nitrogen coordinated import and export of arginine across the yeast vacuolar membrane.</title>
        <authorList>
            <person name="Cools M."/>
            <person name="Lissoir S."/>
            <person name="Bodo E."/>
            <person name="Ulloa-Calzonzin J."/>
            <person name="DeLuna A."/>
            <person name="Georis I."/>
            <person name="Andre B."/>
        </authorList>
    </citation>
    <scope>FUNCTION</scope>
    <scope>SUBCELLULAR LOCATION</scope>
    <scope>DISRUPTION PHENOTYPE</scope>
</reference>
<name>VSB1_YEAST</name>
<accession>P53273</accession>
<accession>D6VUQ7</accession>
<evidence type="ECO:0000255" key="1"/>
<evidence type="ECO:0000255" key="2">
    <source>
        <dbReference type="PROSITE-ProRule" id="PRU00198"/>
    </source>
</evidence>
<evidence type="ECO:0000269" key="3">
    <source>
    </source>
</evidence>
<evidence type="ECO:0000269" key="4">
    <source>
    </source>
</evidence>
<evidence type="ECO:0000269" key="5">
    <source>
    </source>
</evidence>
<evidence type="ECO:0000303" key="6">
    <source>
    </source>
</evidence>
<evidence type="ECO:0000305" key="7"/>
<evidence type="ECO:0007744" key="8">
    <source>
    </source>
</evidence>
<evidence type="ECO:0007744" key="9">
    <source>
    </source>
</evidence>
<evidence type="ECO:0007744" key="10">
    <source>
    </source>
</evidence>
<evidence type="ECO:0007744" key="11">
    <source>
    </source>
</evidence>
<protein>
    <recommendedName>
        <fullName evidence="7">Vacuolar basic amino acid transporter VSB1</fullName>
    </recommendedName>
    <alternativeName>
        <fullName evidence="6">Vacuolar storage of basic amino acids 1</fullName>
    </alternativeName>
</protein>
<gene>
    <name evidence="6" type="primary">VSB1</name>
    <name type="ordered locus">YGR125W</name>
    <name type="ORF">G6362</name>
</gene>
<comment type="function">
    <text evidence="5">Amino acid transporter involved in vacuolar uptake of basic amino acids for storage during nitrogen replete condititions (PubMed:32776922). May function as an amino acid/proton antiporter (PubMed:32776922).</text>
</comment>
<comment type="subcellular location">
    <subcellularLocation>
        <location evidence="3 5">Vacuole membrane</location>
        <topology evidence="3">Multi-pass membrane protein</topology>
    </subcellularLocation>
    <text evidence="5">Localizes to the vacuolar membrane both under nitrogen replete and deplete conditions.</text>
</comment>
<comment type="disruption phenotype">
    <text evidence="5">Decreases cellular arginine uptake (PubMed:32776922). Sensitive to canavanine; the effect is suppressed by simultaneous knockout of YPQ2 (PubMed:32776922).</text>
</comment>
<comment type="miscellaneous">
    <text evidence="4">Present with 1420 molecules/cell in log phase SD medium.</text>
</comment>
<organism>
    <name type="scientific">Saccharomyces cerevisiae (strain ATCC 204508 / S288c)</name>
    <name type="common">Baker's yeast</name>
    <dbReference type="NCBI Taxonomy" id="559292"/>
    <lineage>
        <taxon>Eukaryota</taxon>
        <taxon>Fungi</taxon>
        <taxon>Dikarya</taxon>
        <taxon>Ascomycota</taxon>
        <taxon>Saccharomycotina</taxon>
        <taxon>Saccharomycetes</taxon>
        <taxon>Saccharomycetales</taxon>
        <taxon>Saccharomycetaceae</taxon>
        <taxon>Saccharomyces</taxon>
    </lineage>
</organism>
<proteinExistence type="evidence at protein level"/>
<sequence length="1036" mass="116971">MGRTIRRRRSNSSLSEAISVSLGINQDSSVNKMHRASVSAMSPPLCRSYMSGFFTGGNSPMINNLSDSKLPISNKQHPKVIHGSENLHRQTAQLSNEFCSSSVEENSPTIKDYMDIIGNGDRKDDQSMRTIEENIDEEYSDEYSRLLLSPASSNVDDDRNRGLQNSSLPELEDGYAGGYQSLRPSHNLRFRPRNLWHMCTSFPSKFAHYLPAAVLGLLLNILDALSYGMIIFPITEPVFSHLGPTGISMFYISTIISQAVYSGGWSSFPSGIGSEMIEITPFYHTMALAIKEALAGNDDEIITTTIFCYVISSMLTGVVFYALGKLRLGKIVGFFPRHILIGCIGGVGYFLIITGIEVTTRVAKFEYSWPFFSGLFTDYDTLAKWLLPVLLTVVLIGTQRYFKNSLVLPSFYILTLVLFHFIVAIIPTLSLDALRQAGWIFPIANSDSKWYDHYRLFNVHKVHWSLVLQQIPTMMALTFFGILHVPINVPALAMSLQMDKYDVDRELIAHGYSNFFSGLLGSVQNYLVYTNSVLFIRAGADSPFAGFLLIALTICIMIIGPVIISFIPICIVGSLIFLLGYELLVEALVDTWNKLNRFEYLTVVIIVFTMGIFDFVLGIIVGILIACFSFLVDSTKLQTINGEYNGNVARSTVYRDYVQTKFLDGIGEQIYVLKLQNLLFFGTIISIEEKIERLLQISNKDATKRRIKYLILDFKNINADNIDYSAAEGFNRIKRFTETKRIKLIISSIKERDRIYNAFNNVGLLNDVELFADLNSALEWCENEFLFQYKQLRKKAKERLEEGKQNNVVSAVIAATKNKKIDTIGNGLNRGSNGDTARNLMSLPTNTPRNYQILSVAQNVFVNDEQAVKNFKKEYKDDEPVLPILLFALKQYRPDIISEVQKVREKEIKFWAQLCPYFTRRRLASQSHLLHADNIFFLVETGMLKATYELPQGTLYEIFSNGTCFGKIIAPGNAMPREQKLTIETETDSVLWVIDSSSLNKLKEDNLALYVEVALMVMCIKDTRFKELLGYTLVSA</sequence>
<dbReference type="EMBL" id="X83099">
    <property type="protein sequence ID" value="CAA58161.1"/>
    <property type="molecule type" value="Genomic_DNA"/>
</dbReference>
<dbReference type="EMBL" id="Z72910">
    <property type="protein sequence ID" value="CAA97136.1"/>
    <property type="molecule type" value="Genomic_DNA"/>
</dbReference>
<dbReference type="EMBL" id="BK006941">
    <property type="protein sequence ID" value="DAA08218.1"/>
    <property type="molecule type" value="Genomic_DNA"/>
</dbReference>
<dbReference type="PIR" id="S55984">
    <property type="entry name" value="S55984"/>
</dbReference>
<dbReference type="RefSeq" id="NP_011641.1">
    <property type="nucleotide sequence ID" value="NM_001181254.1"/>
</dbReference>
<dbReference type="SMR" id="P53273"/>
<dbReference type="BioGRID" id="33373">
    <property type="interactions" value="163"/>
</dbReference>
<dbReference type="DIP" id="DIP-7435N"/>
<dbReference type="FunCoup" id="P53273">
    <property type="interactions" value="5"/>
</dbReference>
<dbReference type="IntAct" id="P53273">
    <property type="interactions" value="41"/>
</dbReference>
<dbReference type="MINT" id="P53273"/>
<dbReference type="STRING" id="4932.YGR125W"/>
<dbReference type="TCDB" id="2.A.53.3.10">
    <property type="family name" value="the sulfate permease (sulp) family"/>
</dbReference>
<dbReference type="iPTMnet" id="P53273"/>
<dbReference type="PaxDb" id="4932-YGR125W"/>
<dbReference type="PeptideAtlas" id="P53273"/>
<dbReference type="EnsemblFungi" id="YGR125W_mRNA">
    <property type="protein sequence ID" value="YGR125W"/>
    <property type="gene ID" value="YGR125W"/>
</dbReference>
<dbReference type="GeneID" id="853026"/>
<dbReference type="KEGG" id="sce:YGR125W"/>
<dbReference type="AGR" id="SGD:S000003357"/>
<dbReference type="SGD" id="S000003357">
    <property type="gene designation" value="VSB1"/>
</dbReference>
<dbReference type="VEuPathDB" id="FungiDB:YGR125W"/>
<dbReference type="eggNOG" id="KOG0236">
    <property type="taxonomic scope" value="Eukaryota"/>
</dbReference>
<dbReference type="GeneTree" id="ENSGT01070000253775"/>
<dbReference type="HOGENOM" id="CLU_003182_0_2_1"/>
<dbReference type="InParanoid" id="P53273"/>
<dbReference type="OMA" id="IEITPFY"/>
<dbReference type="OrthoDB" id="409725at2759"/>
<dbReference type="BioCyc" id="YEAST:G3O-30831-MONOMER"/>
<dbReference type="BioGRID-ORCS" id="853026">
    <property type="hits" value="0 hits in 10 CRISPR screens"/>
</dbReference>
<dbReference type="PRO" id="PR:P53273"/>
<dbReference type="Proteomes" id="UP000002311">
    <property type="component" value="Chromosome VII"/>
</dbReference>
<dbReference type="RNAct" id="P53273">
    <property type="molecule type" value="protein"/>
</dbReference>
<dbReference type="GO" id="GO:0000324">
    <property type="term" value="C:fungal-type vacuole"/>
    <property type="evidence" value="ECO:0007005"/>
    <property type="project" value="SGD"/>
</dbReference>
<dbReference type="GO" id="GO:0000329">
    <property type="term" value="C:fungal-type vacuole membrane"/>
    <property type="evidence" value="ECO:0000314"/>
    <property type="project" value="SGD"/>
</dbReference>
<dbReference type="GO" id="GO:0005886">
    <property type="term" value="C:plasma membrane"/>
    <property type="evidence" value="ECO:0000318"/>
    <property type="project" value="GO_Central"/>
</dbReference>
<dbReference type="GO" id="GO:0034618">
    <property type="term" value="F:arginine binding"/>
    <property type="evidence" value="ECO:0000315"/>
    <property type="project" value="SGD"/>
</dbReference>
<dbReference type="GO" id="GO:0034490">
    <property type="term" value="P:basic amino acid transmembrane import into vacuole"/>
    <property type="evidence" value="ECO:0000315"/>
    <property type="project" value="SGD"/>
</dbReference>
<dbReference type="CDD" id="cd00038">
    <property type="entry name" value="CAP_ED"/>
    <property type="match status" value="1"/>
</dbReference>
<dbReference type="CDD" id="cd07042">
    <property type="entry name" value="STAS_SulP_like_sulfate_transporter"/>
    <property type="match status" value="1"/>
</dbReference>
<dbReference type="FunFam" id="3.30.750.24:FF:000012">
    <property type="entry name" value="Sulfate transporter family protein"/>
    <property type="match status" value="1"/>
</dbReference>
<dbReference type="FunFam" id="2.60.120.10:FF:000200">
    <property type="entry name" value="YGR125W-like protein"/>
    <property type="match status" value="1"/>
</dbReference>
<dbReference type="Gene3D" id="2.60.120.10">
    <property type="entry name" value="Jelly Rolls"/>
    <property type="match status" value="1"/>
</dbReference>
<dbReference type="Gene3D" id="3.30.750.24">
    <property type="entry name" value="STAS domain"/>
    <property type="match status" value="1"/>
</dbReference>
<dbReference type="InterPro" id="IPR000595">
    <property type="entry name" value="cNMP-bd_dom"/>
</dbReference>
<dbReference type="InterPro" id="IPR018490">
    <property type="entry name" value="cNMP-bd_dom_sf"/>
</dbReference>
<dbReference type="InterPro" id="IPR052706">
    <property type="entry name" value="Membrane-Transporter-like"/>
</dbReference>
<dbReference type="InterPro" id="IPR014710">
    <property type="entry name" value="RmlC-like_jellyroll"/>
</dbReference>
<dbReference type="InterPro" id="IPR011547">
    <property type="entry name" value="SLC26A/SulP_dom"/>
</dbReference>
<dbReference type="InterPro" id="IPR002645">
    <property type="entry name" value="STAS_dom"/>
</dbReference>
<dbReference type="InterPro" id="IPR036513">
    <property type="entry name" value="STAS_dom_sf"/>
</dbReference>
<dbReference type="PANTHER" id="PTHR43310:SF4">
    <property type="entry name" value="AFR304WP"/>
    <property type="match status" value="1"/>
</dbReference>
<dbReference type="PANTHER" id="PTHR43310">
    <property type="entry name" value="SULFATE TRANSPORTER YBAR-RELATED"/>
    <property type="match status" value="1"/>
</dbReference>
<dbReference type="Pfam" id="PF01740">
    <property type="entry name" value="STAS"/>
    <property type="match status" value="1"/>
</dbReference>
<dbReference type="Pfam" id="PF00916">
    <property type="entry name" value="Sulfate_transp"/>
    <property type="match status" value="1"/>
</dbReference>
<dbReference type="SUPFAM" id="SSF63491">
    <property type="entry name" value="BAG domain"/>
    <property type="match status" value="1"/>
</dbReference>
<dbReference type="SUPFAM" id="SSF51206">
    <property type="entry name" value="cAMP-binding domain-like"/>
    <property type="match status" value="1"/>
</dbReference>
<dbReference type="SUPFAM" id="SSF52091">
    <property type="entry name" value="SpoIIaa-like"/>
    <property type="match status" value="1"/>
</dbReference>
<dbReference type="PROSITE" id="PS50801">
    <property type="entry name" value="STAS"/>
    <property type="match status" value="1"/>
</dbReference>
<feature type="chain" id="PRO_0000202819" description="Vacuolar basic amino acid transporter VSB1">
    <location>
        <begin position="1"/>
        <end position="1036"/>
    </location>
</feature>
<feature type="topological domain" description="Vacuolar" evidence="1">
    <location>
        <begin position="1"/>
        <end position="213"/>
    </location>
</feature>
<feature type="transmembrane region" description="Helical" evidence="1">
    <location>
        <begin position="214"/>
        <end position="234"/>
    </location>
</feature>
<feature type="topological domain" description="Cytoplasmic" evidence="1">
    <location>
        <begin position="235"/>
        <end position="236"/>
    </location>
</feature>
<feature type="transmembrane region" description="Helical" evidence="1">
    <location>
        <begin position="237"/>
        <end position="257"/>
    </location>
</feature>
<feature type="topological domain" description="Vacuolar" evidence="1">
    <location>
        <begin position="258"/>
        <end position="269"/>
    </location>
</feature>
<feature type="transmembrane region" description="Helical" evidence="1">
    <location>
        <begin position="270"/>
        <end position="290"/>
    </location>
</feature>
<feature type="topological domain" description="Cytoplasmic" evidence="1">
    <location>
        <begin position="291"/>
        <end position="300"/>
    </location>
</feature>
<feature type="transmembrane region" description="Helical" evidence="1">
    <location>
        <begin position="301"/>
        <end position="321"/>
    </location>
</feature>
<feature type="topological domain" description="Vacuolar" evidence="1">
    <location>
        <begin position="322"/>
        <end position="338"/>
    </location>
</feature>
<feature type="transmembrane region" description="Helical" evidence="1">
    <location>
        <begin position="339"/>
        <end position="359"/>
    </location>
</feature>
<feature type="topological domain" description="Cytoplasmic" evidence="1">
    <location>
        <begin position="360"/>
        <end position="375"/>
    </location>
</feature>
<feature type="transmembrane region" description="Helical" evidence="1">
    <location>
        <begin position="376"/>
        <end position="396"/>
    </location>
</feature>
<feature type="topological domain" description="Vacuolar" evidence="1">
    <location>
        <begin position="397"/>
        <end position="405"/>
    </location>
</feature>
<feature type="transmembrane region" description="Helical" evidence="1">
    <location>
        <begin position="406"/>
        <end position="426"/>
    </location>
</feature>
<feature type="topological domain" description="Cytoplasmic" evidence="1">
    <location>
        <begin position="427"/>
        <end position="473"/>
    </location>
</feature>
<feature type="transmembrane region" description="Helical" evidence="1">
    <location>
        <begin position="474"/>
        <end position="494"/>
    </location>
</feature>
<feature type="topological domain" description="Vacuolar" evidence="1">
    <location>
        <begin position="495"/>
        <end position="515"/>
    </location>
</feature>
<feature type="transmembrane region" description="Helical" evidence="1">
    <location>
        <begin position="516"/>
        <end position="536"/>
    </location>
</feature>
<feature type="topological domain" description="Cytoplasmic" evidence="1">
    <location>
        <begin position="537"/>
        <end position="546"/>
    </location>
</feature>
<feature type="transmembrane region" description="Helical" evidence="1">
    <location>
        <begin position="547"/>
        <end position="567"/>
    </location>
</feature>
<feature type="topological domain" description="Vacuolar" evidence="1">
    <location>
        <position position="568"/>
    </location>
</feature>
<feature type="transmembrane region" description="Helical" evidence="1">
    <location>
        <begin position="569"/>
        <end position="589"/>
    </location>
</feature>
<feature type="topological domain" description="Cytoplasmic" evidence="1">
    <location>
        <begin position="590"/>
        <end position="604"/>
    </location>
</feature>
<feature type="transmembrane region" description="Helical" evidence="1">
    <location>
        <begin position="605"/>
        <end position="625"/>
    </location>
</feature>
<feature type="topological domain" description="Vacuolar" evidence="1">
    <location>
        <begin position="626"/>
        <end position="664"/>
    </location>
</feature>
<feature type="transmembrane region" description="Helical" evidence="1">
    <location>
        <begin position="665"/>
        <end position="685"/>
    </location>
</feature>
<feature type="topological domain" description="Cytoplasmic" evidence="1">
    <location>
        <begin position="686"/>
        <end position="1036"/>
    </location>
</feature>
<feature type="domain" description="STAS" evidence="2">
    <location>
        <begin position="660"/>
        <end position="781"/>
    </location>
</feature>
<feature type="modified residue" description="Phosphoserine" evidence="8 10 11">
    <location>
        <position position="42"/>
    </location>
</feature>
<feature type="modified residue" description="Phosphoserine" evidence="11">
    <location>
        <position position="127"/>
    </location>
</feature>
<feature type="modified residue" description="Phosphothreonine" evidence="11">
    <location>
        <position position="130"/>
    </location>
</feature>
<feature type="modified residue" description="Phosphoserine" evidence="9 11">
    <location>
        <position position="140"/>
    </location>
</feature>
<feature type="modified residue" description="Phosphoserine" evidence="11">
    <location>
        <position position="144"/>
    </location>
</feature>
<feature type="modified residue" description="Phosphoserine" evidence="9 11">
    <location>
        <position position="149"/>
    </location>
</feature>
<feature type="modified residue" description="Phosphoserine" evidence="9">
    <location>
        <position position="152"/>
    </location>
</feature>
<feature type="modified residue" description="Phosphoserine" evidence="9">
    <location>
        <position position="153"/>
    </location>
</feature>
<feature type="modified residue" description="Phosphoserine" evidence="9 10 11">
    <location>
        <position position="842"/>
    </location>
</feature>
<feature type="modified residue" description="Phosphothreonine" evidence="9 10 11">
    <location>
        <position position="847"/>
    </location>
</feature>